<sequence>MVITVDGPSGAGKGTLCYALAKKLGFSLLDSGAIYRVTALAALKTQEQGQSAVKLDDEFALAELARKLDIQFLPQNGEVQIFLDGENVSGQIRTQDVADAASKVAVFPAVRSALLQLQQDFAKQGKGLIADGRDMGTVVFPNAQVKLFLDASAEERAKRRYKQLQSKGIDGNFAQILAEIKERDFRDRNRLVAPLKPADDALLLDSTELSIEDVIAQALAYIESKTA</sequence>
<proteinExistence type="inferred from homology"/>
<evidence type="ECO:0000255" key="1">
    <source>
        <dbReference type="HAMAP-Rule" id="MF_00238"/>
    </source>
</evidence>
<reference key="1">
    <citation type="journal article" date="2010" name="BMC Genomics">
        <title>A genomic perspective on the potential of Actinobacillus succinogenes for industrial succinate production.</title>
        <authorList>
            <person name="McKinlay J.B."/>
            <person name="Laivenieks M."/>
            <person name="Schindler B.D."/>
            <person name="McKinlay A.A."/>
            <person name="Siddaramappa S."/>
            <person name="Challacombe J.F."/>
            <person name="Lowry S.R."/>
            <person name="Clum A."/>
            <person name="Lapidus A.L."/>
            <person name="Burkhart K.B."/>
            <person name="Harkins V."/>
            <person name="Vieille C."/>
        </authorList>
    </citation>
    <scope>NUCLEOTIDE SEQUENCE [LARGE SCALE GENOMIC DNA]</scope>
    <source>
        <strain>ATCC 55618 / DSM 22257 / CCUG 43843 / 130Z</strain>
    </source>
</reference>
<accession>A6VPL0</accession>
<name>KCY_ACTSZ</name>
<comment type="catalytic activity">
    <reaction evidence="1">
        <text>CMP + ATP = CDP + ADP</text>
        <dbReference type="Rhea" id="RHEA:11600"/>
        <dbReference type="ChEBI" id="CHEBI:30616"/>
        <dbReference type="ChEBI" id="CHEBI:58069"/>
        <dbReference type="ChEBI" id="CHEBI:60377"/>
        <dbReference type="ChEBI" id="CHEBI:456216"/>
        <dbReference type="EC" id="2.7.4.25"/>
    </reaction>
</comment>
<comment type="catalytic activity">
    <reaction evidence="1">
        <text>dCMP + ATP = dCDP + ADP</text>
        <dbReference type="Rhea" id="RHEA:25094"/>
        <dbReference type="ChEBI" id="CHEBI:30616"/>
        <dbReference type="ChEBI" id="CHEBI:57566"/>
        <dbReference type="ChEBI" id="CHEBI:58593"/>
        <dbReference type="ChEBI" id="CHEBI:456216"/>
        <dbReference type="EC" id="2.7.4.25"/>
    </reaction>
</comment>
<comment type="subcellular location">
    <subcellularLocation>
        <location evidence="1">Cytoplasm</location>
    </subcellularLocation>
</comment>
<comment type="similarity">
    <text evidence="1">Belongs to the cytidylate kinase family. Type 1 subfamily.</text>
</comment>
<feature type="chain" id="PRO_1000071818" description="Cytidylate kinase">
    <location>
        <begin position="1"/>
        <end position="227"/>
    </location>
</feature>
<feature type="binding site" evidence="1">
    <location>
        <begin position="7"/>
        <end position="15"/>
    </location>
    <ligand>
        <name>ATP</name>
        <dbReference type="ChEBI" id="CHEBI:30616"/>
    </ligand>
</feature>
<protein>
    <recommendedName>
        <fullName evidence="1">Cytidylate kinase</fullName>
        <shortName evidence="1">CK</shortName>
        <ecNumber evidence="1">2.7.4.25</ecNumber>
    </recommendedName>
    <alternativeName>
        <fullName evidence="1">Cytidine monophosphate kinase</fullName>
        <shortName evidence="1">CMP kinase</shortName>
    </alternativeName>
</protein>
<keyword id="KW-0067">ATP-binding</keyword>
<keyword id="KW-0963">Cytoplasm</keyword>
<keyword id="KW-0418">Kinase</keyword>
<keyword id="KW-0547">Nucleotide-binding</keyword>
<keyword id="KW-1185">Reference proteome</keyword>
<keyword id="KW-0808">Transferase</keyword>
<gene>
    <name evidence="1" type="primary">cmk</name>
    <name type="ordered locus">Asuc_1553</name>
</gene>
<organism>
    <name type="scientific">Actinobacillus succinogenes (strain ATCC 55618 / DSM 22257 / CCUG 43843 / 130Z)</name>
    <dbReference type="NCBI Taxonomy" id="339671"/>
    <lineage>
        <taxon>Bacteria</taxon>
        <taxon>Pseudomonadati</taxon>
        <taxon>Pseudomonadota</taxon>
        <taxon>Gammaproteobacteria</taxon>
        <taxon>Pasteurellales</taxon>
        <taxon>Pasteurellaceae</taxon>
        <taxon>Actinobacillus</taxon>
    </lineage>
</organism>
<dbReference type="EC" id="2.7.4.25" evidence="1"/>
<dbReference type="EMBL" id="CP000746">
    <property type="protein sequence ID" value="ABR74907.1"/>
    <property type="molecule type" value="Genomic_DNA"/>
</dbReference>
<dbReference type="SMR" id="A6VPL0"/>
<dbReference type="STRING" id="339671.Asuc_1553"/>
<dbReference type="KEGG" id="asu:Asuc_1553"/>
<dbReference type="eggNOG" id="COG0283">
    <property type="taxonomic scope" value="Bacteria"/>
</dbReference>
<dbReference type="HOGENOM" id="CLU_079959_0_0_6"/>
<dbReference type="Proteomes" id="UP000001114">
    <property type="component" value="Chromosome"/>
</dbReference>
<dbReference type="GO" id="GO:0005829">
    <property type="term" value="C:cytosol"/>
    <property type="evidence" value="ECO:0007669"/>
    <property type="project" value="TreeGrafter"/>
</dbReference>
<dbReference type="GO" id="GO:0005524">
    <property type="term" value="F:ATP binding"/>
    <property type="evidence" value="ECO:0007669"/>
    <property type="project" value="UniProtKB-UniRule"/>
</dbReference>
<dbReference type="GO" id="GO:0036430">
    <property type="term" value="F:CMP kinase activity"/>
    <property type="evidence" value="ECO:0007669"/>
    <property type="project" value="RHEA"/>
</dbReference>
<dbReference type="GO" id="GO:0036431">
    <property type="term" value="F:dCMP kinase activity"/>
    <property type="evidence" value="ECO:0007669"/>
    <property type="project" value="RHEA"/>
</dbReference>
<dbReference type="GO" id="GO:0015949">
    <property type="term" value="P:nucleobase-containing small molecule interconversion"/>
    <property type="evidence" value="ECO:0007669"/>
    <property type="project" value="TreeGrafter"/>
</dbReference>
<dbReference type="GO" id="GO:0006220">
    <property type="term" value="P:pyrimidine nucleotide metabolic process"/>
    <property type="evidence" value="ECO:0007669"/>
    <property type="project" value="UniProtKB-UniRule"/>
</dbReference>
<dbReference type="CDD" id="cd02020">
    <property type="entry name" value="CMPK"/>
    <property type="match status" value="1"/>
</dbReference>
<dbReference type="FunFam" id="3.40.50.300:FF:000262">
    <property type="entry name" value="Cytidylate kinase"/>
    <property type="match status" value="1"/>
</dbReference>
<dbReference type="Gene3D" id="3.40.50.300">
    <property type="entry name" value="P-loop containing nucleotide triphosphate hydrolases"/>
    <property type="match status" value="1"/>
</dbReference>
<dbReference type="HAMAP" id="MF_00238">
    <property type="entry name" value="Cytidyl_kinase_type1"/>
    <property type="match status" value="1"/>
</dbReference>
<dbReference type="InterPro" id="IPR003136">
    <property type="entry name" value="Cytidylate_kin"/>
</dbReference>
<dbReference type="InterPro" id="IPR011994">
    <property type="entry name" value="Cytidylate_kinase_dom"/>
</dbReference>
<dbReference type="InterPro" id="IPR027417">
    <property type="entry name" value="P-loop_NTPase"/>
</dbReference>
<dbReference type="NCBIfam" id="TIGR00017">
    <property type="entry name" value="cmk"/>
    <property type="match status" value="1"/>
</dbReference>
<dbReference type="PANTHER" id="PTHR21299:SF2">
    <property type="entry name" value="CYTIDYLATE KINASE"/>
    <property type="match status" value="1"/>
</dbReference>
<dbReference type="PANTHER" id="PTHR21299">
    <property type="entry name" value="CYTIDYLATE KINASE/PANTOATE-BETA-ALANINE LIGASE"/>
    <property type="match status" value="1"/>
</dbReference>
<dbReference type="Pfam" id="PF02224">
    <property type="entry name" value="Cytidylate_kin"/>
    <property type="match status" value="1"/>
</dbReference>
<dbReference type="SUPFAM" id="SSF52540">
    <property type="entry name" value="P-loop containing nucleoside triphosphate hydrolases"/>
    <property type="match status" value="1"/>
</dbReference>